<proteinExistence type="inferred from homology"/>
<evidence type="ECO:0000250" key="1"/>
<evidence type="ECO:0000250" key="2">
    <source>
        <dbReference type="UniProtKB" id="P0C1Z0"/>
    </source>
</evidence>
<evidence type="ECO:0000250" key="3">
    <source>
        <dbReference type="UniProtKB" id="P60775"/>
    </source>
</evidence>
<evidence type="ECO:0000255" key="4"/>
<evidence type="ECO:0000305" key="5"/>
<feature type="signal peptide" evidence="4">
    <location>
        <begin position="1" status="less than"/>
        <end position="20"/>
    </location>
</feature>
<feature type="chain" id="PRO_0000316170" description="Short neurotoxin OKI-10">
    <location>
        <begin position="21"/>
        <end position="82"/>
    </location>
</feature>
<feature type="disulfide bond" evidence="2">
    <location>
        <begin position="23"/>
        <end position="44"/>
    </location>
</feature>
<feature type="disulfide bond" evidence="2">
    <location>
        <begin position="37"/>
        <end position="61"/>
    </location>
</feature>
<feature type="disulfide bond" evidence="2">
    <location>
        <begin position="63"/>
        <end position="74"/>
    </location>
</feature>
<feature type="disulfide bond" evidence="2">
    <location>
        <begin position="75"/>
        <end position="80"/>
    </location>
</feature>
<feature type="non-terminal residue">
    <location>
        <position position="1"/>
    </location>
</feature>
<comment type="function">
    <text evidence="3">Binds to muscle nicotinic acetylcholine receptor (nAChR) and inhibit acetylcholine from binding to the receptor, thereby impairing neuromuscular transmission.</text>
</comment>
<comment type="subcellular location">
    <subcellularLocation>
        <location evidence="1">Secreted</location>
    </subcellularLocation>
</comment>
<comment type="tissue specificity">
    <text evidence="5">Expressed by the venom gland.</text>
</comment>
<comment type="similarity">
    <text evidence="5">Belongs to the three-finger toxin family. Short-chain subfamily. Type I alpha-neurotoxin sub-subfamily.</text>
</comment>
<sequence length="82" mass="9249">KTLLLTLVVVTIVCLDLGYTRRCFNQQSSEPQTNKSCPPGENSCYRKQWRDHRGTIIERGCGCPTVKPGVKLRCCESEDCNN</sequence>
<accession>Q7T2I1</accession>
<name>3S110_LATLA</name>
<organism>
    <name type="scientific">Laticauda laticaudata</name>
    <name type="common">Blue-ringed sea krait</name>
    <name type="synonym">Blue-lipped sea krait</name>
    <dbReference type="NCBI Taxonomy" id="8630"/>
    <lineage>
        <taxon>Eukaryota</taxon>
        <taxon>Metazoa</taxon>
        <taxon>Chordata</taxon>
        <taxon>Craniata</taxon>
        <taxon>Vertebrata</taxon>
        <taxon>Euteleostomi</taxon>
        <taxon>Lepidosauria</taxon>
        <taxon>Squamata</taxon>
        <taxon>Bifurcata</taxon>
        <taxon>Unidentata</taxon>
        <taxon>Episquamata</taxon>
        <taxon>Toxicofera</taxon>
        <taxon>Serpentes</taxon>
        <taxon>Colubroidea</taxon>
        <taxon>Elapidae</taxon>
        <taxon>Laticaudinae</taxon>
        <taxon>Laticauda</taxon>
    </lineage>
</organism>
<keyword id="KW-0008">Acetylcholine receptor inhibiting toxin</keyword>
<keyword id="KW-1015">Disulfide bond</keyword>
<keyword id="KW-0872">Ion channel impairing toxin</keyword>
<keyword id="KW-0528">Neurotoxin</keyword>
<keyword id="KW-0629">Postsynaptic neurotoxin</keyword>
<keyword id="KW-1185">Reference proteome</keyword>
<keyword id="KW-0964">Secreted</keyword>
<keyword id="KW-0732">Signal</keyword>
<keyword id="KW-0800">Toxin</keyword>
<reference key="1">
    <citation type="journal article" date="2003" name="Gene">
        <title>Molecular evolution and diversification of snake toxin genes, revealed by analysis of intron sequences.</title>
        <authorList>
            <person name="Fujimi T.J."/>
            <person name="Nakajyo T."/>
            <person name="Nishimura E."/>
            <person name="Ogura E."/>
            <person name="Tsuchiya T."/>
            <person name="Tamiya T."/>
        </authorList>
    </citation>
    <scope>NUCLEOTIDE SEQUENCE [GENOMIC DNA]</scope>
    <source>
        <tissue>Liver</tissue>
    </source>
</reference>
<protein>
    <recommendedName>
        <fullName>Short neurotoxin OKI-10</fullName>
    </recommendedName>
</protein>
<dbReference type="EMBL" id="AB098535">
    <property type="protein sequence ID" value="BAC78207.1"/>
    <property type="molecule type" value="Genomic_DNA"/>
</dbReference>
<dbReference type="SMR" id="Q7T2I1"/>
<dbReference type="Proteomes" id="UP000694406">
    <property type="component" value="Unplaced"/>
</dbReference>
<dbReference type="GO" id="GO:0005576">
    <property type="term" value="C:extracellular region"/>
    <property type="evidence" value="ECO:0007669"/>
    <property type="project" value="UniProtKB-SubCell"/>
</dbReference>
<dbReference type="GO" id="GO:0030550">
    <property type="term" value="F:acetylcholine receptor inhibitor activity"/>
    <property type="evidence" value="ECO:0007669"/>
    <property type="project" value="UniProtKB-KW"/>
</dbReference>
<dbReference type="GO" id="GO:0099106">
    <property type="term" value="F:ion channel regulator activity"/>
    <property type="evidence" value="ECO:0007669"/>
    <property type="project" value="UniProtKB-KW"/>
</dbReference>
<dbReference type="GO" id="GO:0090729">
    <property type="term" value="F:toxin activity"/>
    <property type="evidence" value="ECO:0007669"/>
    <property type="project" value="UniProtKB-KW"/>
</dbReference>
<dbReference type="CDD" id="cd00206">
    <property type="entry name" value="TFP_snake_toxin"/>
    <property type="match status" value="1"/>
</dbReference>
<dbReference type="FunFam" id="2.10.60.10:FF:000024">
    <property type="entry name" value="Cytotoxin 1"/>
    <property type="match status" value="1"/>
</dbReference>
<dbReference type="Gene3D" id="2.10.60.10">
    <property type="entry name" value="CD59"/>
    <property type="match status" value="1"/>
</dbReference>
<dbReference type="InterPro" id="IPR003571">
    <property type="entry name" value="Snake_3FTx"/>
</dbReference>
<dbReference type="InterPro" id="IPR045860">
    <property type="entry name" value="Snake_toxin-like_sf"/>
</dbReference>
<dbReference type="InterPro" id="IPR018354">
    <property type="entry name" value="Snake_toxin_con_site"/>
</dbReference>
<dbReference type="InterPro" id="IPR054131">
    <property type="entry name" value="Toxin_cobra-type"/>
</dbReference>
<dbReference type="Pfam" id="PF21947">
    <property type="entry name" value="Toxin_cobra-type"/>
    <property type="match status" value="1"/>
</dbReference>
<dbReference type="SUPFAM" id="SSF57302">
    <property type="entry name" value="Snake toxin-like"/>
    <property type="match status" value="1"/>
</dbReference>
<dbReference type="PROSITE" id="PS00272">
    <property type="entry name" value="SNAKE_TOXIN"/>
    <property type="match status" value="1"/>
</dbReference>